<accession>B7NVX5</accession>
<reference key="1">
    <citation type="journal article" date="2009" name="PLoS Genet.">
        <title>Organised genome dynamics in the Escherichia coli species results in highly diverse adaptive paths.</title>
        <authorList>
            <person name="Touchon M."/>
            <person name="Hoede C."/>
            <person name="Tenaillon O."/>
            <person name="Barbe V."/>
            <person name="Baeriswyl S."/>
            <person name="Bidet P."/>
            <person name="Bingen E."/>
            <person name="Bonacorsi S."/>
            <person name="Bouchier C."/>
            <person name="Bouvet O."/>
            <person name="Calteau A."/>
            <person name="Chiapello H."/>
            <person name="Clermont O."/>
            <person name="Cruveiller S."/>
            <person name="Danchin A."/>
            <person name="Diard M."/>
            <person name="Dossat C."/>
            <person name="Karoui M.E."/>
            <person name="Frapy E."/>
            <person name="Garry L."/>
            <person name="Ghigo J.M."/>
            <person name="Gilles A.M."/>
            <person name="Johnson J."/>
            <person name="Le Bouguenec C."/>
            <person name="Lescat M."/>
            <person name="Mangenot S."/>
            <person name="Martinez-Jehanne V."/>
            <person name="Matic I."/>
            <person name="Nassif X."/>
            <person name="Oztas S."/>
            <person name="Petit M.A."/>
            <person name="Pichon C."/>
            <person name="Rouy Z."/>
            <person name="Ruf C.S."/>
            <person name="Schneider D."/>
            <person name="Tourret J."/>
            <person name="Vacherie B."/>
            <person name="Vallenet D."/>
            <person name="Medigue C."/>
            <person name="Rocha E.P.C."/>
            <person name="Denamur E."/>
        </authorList>
    </citation>
    <scope>NUCLEOTIDE SEQUENCE [LARGE SCALE GENOMIC DNA]</scope>
    <source>
        <strain>IAI39 / ExPEC</strain>
    </source>
</reference>
<evidence type="ECO:0000255" key="1">
    <source>
        <dbReference type="HAMAP-Rule" id="MF_00298"/>
    </source>
</evidence>
<name>RPPH_ECO7I</name>
<feature type="chain" id="PRO_1000119471" description="RNA pyrophosphohydrolase">
    <location>
        <begin position="1"/>
        <end position="176"/>
    </location>
</feature>
<feature type="domain" description="Nudix hydrolase" evidence="1">
    <location>
        <begin position="6"/>
        <end position="149"/>
    </location>
</feature>
<feature type="short sequence motif" description="Nudix box">
    <location>
        <begin position="38"/>
        <end position="59"/>
    </location>
</feature>
<dbReference type="EC" id="3.6.1.-" evidence="1"/>
<dbReference type="EMBL" id="CU928164">
    <property type="protein sequence ID" value="CAR19368.1"/>
    <property type="molecule type" value="Genomic_DNA"/>
</dbReference>
<dbReference type="RefSeq" id="WP_000564489.1">
    <property type="nucleotide sequence ID" value="NC_011750.1"/>
</dbReference>
<dbReference type="RefSeq" id="YP_002409173.1">
    <property type="nucleotide sequence ID" value="NC_011750.1"/>
</dbReference>
<dbReference type="SMR" id="B7NVX5"/>
<dbReference type="STRING" id="585057.ECIAI39_3249"/>
<dbReference type="GeneID" id="75203778"/>
<dbReference type="KEGG" id="ect:ECIAI39_3249"/>
<dbReference type="PATRIC" id="fig|585057.6.peg.3376"/>
<dbReference type="HOGENOM" id="CLU_087195_3_2_6"/>
<dbReference type="Proteomes" id="UP000000749">
    <property type="component" value="Chromosome"/>
</dbReference>
<dbReference type="GO" id="GO:0005737">
    <property type="term" value="C:cytoplasm"/>
    <property type="evidence" value="ECO:0007669"/>
    <property type="project" value="TreeGrafter"/>
</dbReference>
<dbReference type="GO" id="GO:0034353">
    <property type="term" value="F:mRNA 5'-diphosphatase activity"/>
    <property type="evidence" value="ECO:0007669"/>
    <property type="project" value="TreeGrafter"/>
</dbReference>
<dbReference type="GO" id="GO:0006402">
    <property type="term" value="P:mRNA catabolic process"/>
    <property type="evidence" value="ECO:0007669"/>
    <property type="project" value="TreeGrafter"/>
</dbReference>
<dbReference type="CDD" id="cd03671">
    <property type="entry name" value="NUDIX_Ap4A_hydrolase_plant_like"/>
    <property type="match status" value="1"/>
</dbReference>
<dbReference type="FunFam" id="3.90.79.10:FF:000001">
    <property type="entry name" value="RNA pyrophosphohydrolase"/>
    <property type="match status" value="1"/>
</dbReference>
<dbReference type="Gene3D" id="3.90.79.10">
    <property type="entry name" value="Nucleoside Triphosphate Pyrophosphohydrolase"/>
    <property type="match status" value="1"/>
</dbReference>
<dbReference type="HAMAP" id="MF_00298">
    <property type="entry name" value="Nudix_RppH"/>
    <property type="match status" value="1"/>
</dbReference>
<dbReference type="InterPro" id="IPR020476">
    <property type="entry name" value="Nudix_hydrolase"/>
</dbReference>
<dbReference type="InterPro" id="IPR015797">
    <property type="entry name" value="NUDIX_hydrolase-like_dom_sf"/>
</dbReference>
<dbReference type="InterPro" id="IPR020084">
    <property type="entry name" value="NUDIX_hydrolase_CS"/>
</dbReference>
<dbReference type="InterPro" id="IPR000086">
    <property type="entry name" value="NUDIX_hydrolase_dom"/>
</dbReference>
<dbReference type="InterPro" id="IPR022927">
    <property type="entry name" value="RppH"/>
</dbReference>
<dbReference type="NCBIfam" id="NF001934">
    <property type="entry name" value="PRK00714.1-1"/>
    <property type="match status" value="1"/>
</dbReference>
<dbReference type="NCBIfam" id="NF001937">
    <property type="entry name" value="PRK00714.1-4"/>
    <property type="match status" value="1"/>
</dbReference>
<dbReference type="NCBIfam" id="NF001938">
    <property type="entry name" value="PRK00714.1-5"/>
    <property type="match status" value="1"/>
</dbReference>
<dbReference type="PANTHER" id="PTHR23114">
    <property type="entry name" value="M7GPPPN-MRNA HYDROLASE"/>
    <property type="match status" value="1"/>
</dbReference>
<dbReference type="PANTHER" id="PTHR23114:SF17">
    <property type="entry name" value="M7GPPPN-MRNA HYDROLASE"/>
    <property type="match status" value="1"/>
</dbReference>
<dbReference type="Pfam" id="PF00293">
    <property type="entry name" value="NUDIX"/>
    <property type="match status" value="1"/>
</dbReference>
<dbReference type="PRINTS" id="PR00502">
    <property type="entry name" value="NUDIXFAMILY"/>
</dbReference>
<dbReference type="SUPFAM" id="SSF55811">
    <property type="entry name" value="Nudix"/>
    <property type="match status" value="1"/>
</dbReference>
<dbReference type="PROSITE" id="PS51462">
    <property type="entry name" value="NUDIX"/>
    <property type="match status" value="1"/>
</dbReference>
<dbReference type="PROSITE" id="PS00893">
    <property type="entry name" value="NUDIX_BOX"/>
    <property type="match status" value="1"/>
</dbReference>
<proteinExistence type="inferred from homology"/>
<sequence>MIDDDGYRPNVGIVICNRQGQVMWARRFGQHSWQFPQGGINPGESAEQAMYRELFEEVGLSRKDVRILASTRNWLRYKLPKRLVRWDTKPVCIGQKQKWFLLQLVSGDAEINMQTSSTPEFDGWRWVSYWYPVRQVVSFKRDVYRRVMKEFASVVMSLQENTPKPQNASAYRRKRG</sequence>
<organism>
    <name type="scientific">Escherichia coli O7:K1 (strain IAI39 / ExPEC)</name>
    <dbReference type="NCBI Taxonomy" id="585057"/>
    <lineage>
        <taxon>Bacteria</taxon>
        <taxon>Pseudomonadati</taxon>
        <taxon>Pseudomonadota</taxon>
        <taxon>Gammaproteobacteria</taxon>
        <taxon>Enterobacterales</taxon>
        <taxon>Enterobacteriaceae</taxon>
        <taxon>Escherichia</taxon>
    </lineage>
</organism>
<comment type="function">
    <text evidence="1">Accelerates the degradation of transcripts by removing pyrophosphate from the 5'-end of triphosphorylated RNA, leading to a more labile monophosphorylated state that can stimulate subsequent ribonuclease cleavage.</text>
</comment>
<comment type="cofactor">
    <cofactor evidence="1">
        <name>a divalent metal cation</name>
        <dbReference type="ChEBI" id="CHEBI:60240"/>
    </cofactor>
</comment>
<comment type="similarity">
    <text evidence="1">Belongs to the Nudix hydrolase family. RppH subfamily.</text>
</comment>
<keyword id="KW-0378">Hydrolase</keyword>
<protein>
    <recommendedName>
        <fullName evidence="1">RNA pyrophosphohydrolase</fullName>
        <ecNumber evidence="1">3.6.1.-</ecNumber>
    </recommendedName>
    <alternativeName>
        <fullName evidence="1">(Di)nucleoside polyphosphate hydrolase</fullName>
    </alternativeName>
</protein>
<gene>
    <name evidence="1" type="primary">rppH</name>
    <name evidence="1" type="synonym">nudH</name>
    <name type="ordered locus">ECIAI39_3249</name>
</gene>